<organism>
    <name type="scientific">Arabidopsis thaliana</name>
    <name type="common">Mouse-ear cress</name>
    <dbReference type="NCBI Taxonomy" id="3702"/>
    <lineage>
        <taxon>Eukaryota</taxon>
        <taxon>Viridiplantae</taxon>
        <taxon>Streptophyta</taxon>
        <taxon>Embryophyta</taxon>
        <taxon>Tracheophyta</taxon>
        <taxon>Spermatophyta</taxon>
        <taxon>Magnoliopsida</taxon>
        <taxon>eudicotyledons</taxon>
        <taxon>Gunneridae</taxon>
        <taxon>Pentapetalae</taxon>
        <taxon>rosids</taxon>
        <taxon>malvids</taxon>
        <taxon>Brassicales</taxon>
        <taxon>Brassicaceae</taxon>
        <taxon>Camelineae</taxon>
        <taxon>Arabidopsis</taxon>
    </lineage>
</organism>
<name>ARP9_ARATH</name>
<sequence>MAKPKSNSHLSWQDYLKTVAPTQILSERGANLVVINLGSANVRVGLAMDEKPFNVPNCIARYITQSGKPTVVDQMLNTEVTTNQHVDRERAYNSAASLLKILFLDESSSSGSASRKMGRIDGYNQASTIKKDSVFTWTDVYEDEKISLASPAETSPDKGDASASEAVPDVTDSKDTSESKRKYRKMIFGEEALKISPKEPYCLYHPIRRGHFNVSPHYSAQRVCEDLTAILDWILLEKLHITHKERFSFHAVIVVPETFDTREIKEMLTIVLGELYFNSAVVHQEGLSAVFGNGLTTACIVNIGAQTSTVVCVEDGVSLPNTEKILPFGGEDICRCLLWIQRHYQKWPQINTDVLAKPIDMLMLNQLKESFCEIRAGELETVATVHSYEEGMPAVPHKTNLTSLNVPPMGLFYPNLLVPEIFPQPPRQWFQDYENMLEDTWNMDFGGGGNMGLPMWDSFAFSPSKPKKEEKIGLAEAITSSILSAGRIDLRRKLFSSIQLIGGAGLTKGLVAAVEERVLHAIPPTEAIDTVQVLPSRTEPQFVTWKGGAILGILDFGREAWIERHQWMVNGVNKGGLKKYKDSYHLQGQAMYFINP</sequence>
<comment type="alternative products">
    <event type="alternative splicing"/>
    <isoform>
        <id>Q9LSW2-1</id>
        <name>1</name>
        <sequence type="displayed"/>
    </isoform>
    <isoform>
        <id>Q9LSW2-2</id>
        <name>2</name>
        <sequence type="described" ref="VSP_031653"/>
    </isoform>
</comment>
<comment type="similarity">
    <text evidence="3">Belongs to the actin family. ARP8 subfamily.</text>
</comment>
<evidence type="ECO:0000256" key="1">
    <source>
        <dbReference type="SAM" id="MobiDB-lite"/>
    </source>
</evidence>
<evidence type="ECO:0000303" key="2">
    <source>
    </source>
</evidence>
<evidence type="ECO:0000305" key="3"/>
<dbReference type="EMBL" id="AB025638">
    <property type="protein sequence ID" value="BAA97429.1"/>
    <property type="molecule type" value="Genomic_DNA"/>
</dbReference>
<dbReference type="EMBL" id="CP002688">
    <property type="protein sequence ID" value="AED94971.1"/>
    <property type="molecule type" value="Genomic_DNA"/>
</dbReference>
<dbReference type="EMBL" id="CP002688">
    <property type="protein sequence ID" value="AED94972.1"/>
    <property type="molecule type" value="Genomic_DNA"/>
</dbReference>
<dbReference type="EMBL" id="AK117749">
    <property type="protein sequence ID" value="BAC42397.1"/>
    <property type="molecule type" value="mRNA"/>
</dbReference>
<dbReference type="EMBL" id="AY057568">
    <property type="protein sequence ID" value="AAL09807.1"/>
    <property type="molecule type" value="mRNA"/>
</dbReference>
<dbReference type="RefSeq" id="NP_199163.1">
    <molecule id="Q9LSW2-1"/>
    <property type="nucleotide sequence ID" value="NM_123716.3"/>
</dbReference>
<dbReference type="RefSeq" id="NP_974876.1">
    <molecule id="Q9LSW2-2"/>
    <property type="nucleotide sequence ID" value="NM_203147.2"/>
</dbReference>
<dbReference type="SMR" id="Q9LSW2"/>
<dbReference type="BioGRID" id="19620">
    <property type="interactions" value="71"/>
</dbReference>
<dbReference type="FunCoup" id="Q9LSW2">
    <property type="interactions" value="3630"/>
</dbReference>
<dbReference type="STRING" id="3702.Q9LSW2"/>
<dbReference type="GlyGen" id="Q9LSW2">
    <property type="glycosylation" value="1 site"/>
</dbReference>
<dbReference type="iPTMnet" id="Q9LSW2"/>
<dbReference type="PaxDb" id="3702-AT5G43500.1"/>
<dbReference type="ProteomicsDB" id="246924">
    <molecule id="Q9LSW2-1"/>
</dbReference>
<dbReference type="EnsemblPlants" id="AT5G43500.1">
    <molecule id="Q9LSW2-1"/>
    <property type="protein sequence ID" value="AT5G43500.1"/>
    <property type="gene ID" value="AT5G43500"/>
</dbReference>
<dbReference type="EnsemblPlants" id="AT5G43500.2">
    <molecule id="Q9LSW2-2"/>
    <property type="protein sequence ID" value="AT5G43500.2"/>
    <property type="gene ID" value="AT5G43500"/>
</dbReference>
<dbReference type="GeneID" id="834370"/>
<dbReference type="Gramene" id="AT5G43500.1">
    <molecule id="Q9LSW2-1"/>
    <property type="protein sequence ID" value="AT5G43500.1"/>
    <property type="gene ID" value="AT5G43500"/>
</dbReference>
<dbReference type="Gramene" id="AT5G43500.2">
    <molecule id="Q9LSW2-2"/>
    <property type="protein sequence ID" value="AT5G43500.2"/>
    <property type="gene ID" value="AT5G43500"/>
</dbReference>
<dbReference type="KEGG" id="ath:AT5G43500"/>
<dbReference type="Araport" id="AT5G43500"/>
<dbReference type="TAIR" id="AT5G43500">
    <property type="gene designation" value="ARP9"/>
</dbReference>
<dbReference type="eggNOG" id="KOG0797">
    <property type="taxonomic scope" value="Eukaryota"/>
</dbReference>
<dbReference type="InParanoid" id="Q9LSW2"/>
<dbReference type="OMA" id="PMWDNYP"/>
<dbReference type="PhylomeDB" id="Q9LSW2"/>
<dbReference type="PRO" id="PR:Q9LSW2"/>
<dbReference type="Proteomes" id="UP000006548">
    <property type="component" value="Chromosome 5"/>
</dbReference>
<dbReference type="ExpressionAtlas" id="Q9LSW2">
    <property type="expression patterns" value="baseline and differential"/>
</dbReference>
<dbReference type="CDD" id="cd10206">
    <property type="entry name" value="ASKHA_NBD_Arp8-like"/>
    <property type="match status" value="1"/>
</dbReference>
<dbReference type="FunFam" id="3.30.420.40:FF:000286">
    <property type="entry name" value="Actin-related protein 8"/>
    <property type="match status" value="1"/>
</dbReference>
<dbReference type="FunFam" id="3.30.420.40:FF:000353">
    <property type="entry name" value="Actin-related protein 9"/>
    <property type="match status" value="1"/>
</dbReference>
<dbReference type="FunFam" id="3.30.420.40:FF:000400">
    <property type="entry name" value="Actin-related protein 9"/>
    <property type="match status" value="1"/>
</dbReference>
<dbReference type="FunFam" id="3.90.640.10:FF:000044">
    <property type="entry name" value="Actin-related protein 9"/>
    <property type="match status" value="1"/>
</dbReference>
<dbReference type="Gene3D" id="3.30.420.40">
    <property type="match status" value="3"/>
</dbReference>
<dbReference type="Gene3D" id="3.90.640.10">
    <property type="entry name" value="Actin, Chain A, domain 4"/>
    <property type="match status" value="2"/>
</dbReference>
<dbReference type="InterPro" id="IPR004000">
    <property type="entry name" value="Actin"/>
</dbReference>
<dbReference type="InterPro" id="IPR043129">
    <property type="entry name" value="ATPase_NBD"/>
</dbReference>
<dbReference type="PANTHER" id="PTHR11937">
    <property type="entry name" value="ACTIN"/>
    <property type="match status" value="1"/>
</dbReference>
<dbReference type="Pfam" id="PF00022">
    <property type="entry name" value="Actin"/>
    <property type="match status" value="1"/>
</dbReference>
<dbReference type="SMART" id="SM00268">
    <property type="entry name" value="ACTIN"/>
    <property type="match status" value="1"/>
</dbReference>
<dbReference type="SUPFAM" id="SSF53067">
    <property type="entry name" value="Actin-like ATPase domain"/>
    <property type="match status" value="2"/>
</dbReference>
<protein>
    <recommendedName>
        <fullName>Actin-related protein 9</fullName>
    </recommendedName>
</protein>
<keyword id="KW-0025">Alternative splicing</keyword>
<keyword id="KW-1185">Reference proteome</keyword>
<gene>
    <name type="primary">ARP9</name>
    <name type="ordered locus">At5g43500</name>
    <name type="ORF">MWF20.22</name>
</gene>
<feature type="chain" id="PRO_0000320539" description="Actin-related protein 9">
    <location>
        <begin position="1"/>
        <end position="596"/>
    </location>
</feature>
<feature type="region of interest" description="Disordered" evidence="1">
    <location>
        <begin position="148"/>
        <end position="178"/>
    </location>
</feature>
<feature type="splice variant" id="VSP_031653" description="In isoform 2." evidence="2">
    <original>MAKPKSNSHLSWQ</original>
    <variation>M</variation>
    <location>
        <begin position="1"/>
        <end position="13"/>
    </location>
</feature>
<feature type="sequence conflict" description="In Ref. 4; BAC42397." evidence="3" ref="4">
    <original>H</original>
    <variation>R</variation>
    <location>
        <position position="565"/>
    </location>
</feature>
<accession>Q9LSW2</accession>
<accession>Q8GYB3</accession>
<reference key="1">
    <citation type="journal article" date="2000" name="DNA Res.">
        <title>Structural analysis of Arabidopsis thaliana chromosome 5. X. Sequence features of the regions of 3,076,755 bp covered by sixty P1 and TAC clones.</title>
        <authorList>
            <person name="Sato S."/>
            <person name="Nakamura Y."/>
            <person name="Kaneko T."/>
            <person name="Katoh T."/>
            <person name="Asamizu E."/>
            <person name="Kotani H."/>
            <person name="Tabata S."/>
        </authorList>
    </citation>
    <scope>NUCLEOTIDE SEQUENCE [LARGE SCALE GENOMIC DNA]</scope>
    <source>
        <strain>cv. Columbia</strain>
    </source>
</reference>
<reference key="2">
    <citation type="journal article" date="2017" name="Plant J.">
        <title>Araport11: a complete reannotation of the Arabidopsis thaliana reference genome.</title>
        <authorList>
            <person name="Cheng C.Y."/>
            <person name="Krishnakumar V."/>
            <person name="Chan A.P."/>
            <person name="Thibaud-Nissen F."/>
            <person name="Schobel S."/>
            <person name="Town C.D."/>
        </authorList>
    </citation>
    <scope>GENOME REANNOTATION</scope>
    <source>
        <strain>cv. Columbia</strain>
    </source>
</reference>
<reference key="3">
    <citation type="journal article" date="2002" name="Science">
        <title>Functional annotation of a full-length Arabidopsis cDNA collection.</title>
        <authorList>
            <person name="Seki M."/>
            <person name="Narusaka M."/>
            <person name="Kamiya A."/>
            <person name="Ishida J."/>
            <person name="Satou M."/>
            <person name="Sakurai T."/>
            <person name="Nakajima M."/>
            <person name="Enju A."/>
            <person name="Akiyama K."/>
            <person name="Oono Y."/>
            <person name="Muramatsu M."/>
            <person name="Hayashizaki Y."/>
            <person name="Kawai J."/>
            <person name="Carninci P."/>
            <person name="Itoh M."/>
            <person name="Ishii Y."/>
            <person name="Arakawa T."/>
            <person name="Shibata K."/>
            <person name="Shinagawa A."/>
            <person name="Shinozaki K."/>
        </authorList>
    </citation>
    <scope>NUCLEOTIDE SEQUENCE [LARGE SCALE MRNA] (ISOFORM 2)</scope>
    <source>
        <strain>cv. Columbia</strain>
    </source>
</reference>
<reference key="4">
    <citation type="journal article" date="2003" name="Science">
        <title>Empirical analysis of transcriptional activity in the Arabidopsis genome.</title>
        <authorList>
            <person name="Yamada K."/>
            <person name="Lim J."/>
            <person name="Dale J.M."/>
            <person name="Chen H."/>
            <person name="Shinn P."/>
            <person name="Palm C.J."/>
            <person name="Southwick A.M."/>
            <person name="Wu H.C."/>
            <person name="Kim C.J."/>
            <person name="Nguyen M."/>
            <person name="Pham P.K."/>
            <person name="Cheuk R.F."/>
            <person name="Karlin-Newmann G."/>
            <person name="Liu S.X."/>
            <person name="Lam B."/>
            <person name="Sakano H."/>
            <person name="Wu T."/>
            <person name="Yu G."/>
            <person name="Miranda M."/>
            <person name="Quach H.L."/>
            <person name="Tripp M."/>
            <person name="Chang C.H."/>
            <person name="Lee J.M."/>
            <person name="Toriumi M.J."/>
            <person name="Chan M.M."/>
            <person name="Tang C.C."/>
            <person name="Onodera C.S."/>
            <person name="Deng J.M."/>
            <person name="Akiyama K."/>
            <person name="Ansari Y."/>
            <person name="Arakawa T."/>
            <person name="Banh J."/>
            <person name="Banno F."/>
            <person name="Bowser L."/>
            <person name="Brooks S.Y."/>
            <person name="Carninci P."/>
            <person name="Chao Q."/>
            <person name="Choy N."/>
            <person name="Enju A."/>
            <person name="Goldsmith A.D."/>
            <person name="Gurjal M."/>
            <person name="Hansen N.F."/>
            <person name="Hayashizaki Y."/>
            <person name="Johnson-Hopson C."/>
            <person name="Hsuan V.W."/>
            <person name="Iida K."/>
            <person name="Karnes M."/>
            <person name="Khan S."/>
            <person name="Koesema E."/>
            <person name="Ishida J."/>
            <person name="Jiang P.X."/>
            <person name="Jones T."/>
            <person name="Kawai J."/>
            <person name="Kamiya A."/>
            <person name="Meyers C."/>
            <person name="Nakajima M."/>
            <person name="Narusaka M."/>
            <person name="Seki M."/>
            <person name="Sakurai T."/>
            <person name="Satou M."/>
            <person name="Tamse R."/>
            <person name="Vaysberg M."/>
            <person name="Wallender E.K."/>
            <person name="Wong C."/>
            <person name="Yamamura Y."/>
            <person name="Yuan S."/>
            <person name="Shinozaki K."/>
            <person name="Davis R.W."/>
            <person name="Theologis A."/>
            <person name="Ecker J.R."/>
        </authorList>
    </citation>
    <scope>NUCLEOTIDE SEQUENCE [LARGE SCALE MRNA] (ISOFORM 1)</scope>
    <source>
        <strain>cv. Columbia</strain>
    </source>
</reference>
<reference key="5">
    <citation type="journal article" date="2002" name="Plant Physiol.">
        <title>Arabidopsis contains ancient classes of differentially expressed actin-related protein genes.</title>
        <authorList>
            <person name="McKinney E.C."/>
            <person name="Kandasamy M.K."/>
            <person name="Meagher R.B."/>
        </authorList>
    </citation>
    <scope>GENE FAMILY</scope>
</reference>
<reference key="6">
    <citation type="journal article" date="2004" name="Trends Plant Sci.">
        <title>Plant actin-related proteins.</title>
        <authorList>
            <person name="Kandasamy M.K."/>
            <person name="Deal R.B."/>
            <person name="McKinney E.C."/>
            <person name="Meagher R.B."/>
        </authorList>
    </citation>
    <scope>REVIEW</scope>
    <scope>GENE FAMILY</scope>
    <scope>NOMENCLATURE</scope>
</reference>
<proteinExistence type="evidence at transcript level"/>